<sequence>MTKGILGKKVGMTQIFTEAGELIPVTVIEATPNVVLQVKTVETDGYNAIQVGFDDKREVLSNKPAKGHVAKANTAPKRFIREFKNVEGLEVGAEITVETFAAGDVVDVTGTSKGKGFQGVIKRHGQSRGPMAHGSRYHRRPGSMGPVAPNRVFKGKNLAGRMGGDRVTIQNLEVVQVVPEKNVILIKGNVPGAKKSLITIKSAVKAGK</sequence>
<accession>Q04MN6</accession>
<name>RL3_STRP2</name>
<gene>
    <name evidence="1" type="primary">rplC</name>
    <name type="ordered locus">SPD_0193</name>
</gene>
<reference key="1">
    <citation type="journal article" date="2007" name="J. Bacteriol.">
        <title>Genome sequence of Avery's virulent serotype 2 strain D39 of Streptococcus pneumoniae and comparison with that of unencapsulated laboratory strain R6.</title>
        <authorList>
            <person name="Lanie J.A."/>
            <person name="Ng W.-L."/>
            <person name="Kazmierczak K.M."/>
            <person name="Andrzejewski T.M."/>
            <person name="Davidsen T.M."/>
            <person name="Wayne K.J."/>
            <person name="Tettelin H."/>
            <person name="Glass J.I."/>
            <person name="Winkler M.E."/>
        </authorList>
    </citation>
    <scope>NUCLEOTIDE SEQUENCE [LARGE SCALE GENOMIC DNA]</scope>
    <source>
        <strain>D39 / NCTC 7466</strain>
    </source>
</reference>
<evidence type="ECO:0000255" key="1">
    <source>
        <dbReference type="HAMAP-Rule" id="MF_01325"/>
    </source>
</evidence>
<evidence type="ECO:0000256" key="2">
    <source>
        <dbReference type="SAM" id="MobiDB-lite"/>
    </source>
</evidence>
<evidence type="ECO:0000305" key="3"/>
<proteinExistence type="inferred from homology"/>
<dbReference type="EMBL" id="CP000410">
    <property type="protein sequence ID" value="ABJ55021.1"/>
    <property type="molecule type" value="Genomic_DNA"/>
</dbReference>
<dbReference type="RefSeq" id="WP_000160197.1">
    <property type="nucleotide sequence ID" value="NZ_JAMLJR010000002.1"/>
</dbReference>
<dbReference type="SMR" id="Q04MN6"/>
<dbReference type="PaxDb" id="373153-SPD_0193"/>
<dbReference type="GeneID" id="93738957"/>
<dbReference type="KEGG" id="spd:SPD_0193"/>
<dbReference type="eggNOG" id="COG0087">
    <property type="taxonomic scope" value="Bacteria"/>
</dbReference>
<dbReference type="HOGENOM" id="CLU_044142_4_1_9"/>
<dbReference type="BioCyc" id="SPNE373153:G1G6V-216-MONOMER"/>
<dbReference type="Proteomes" id="UP000001452">
    <property type="component" value="Chromosome"/>
</dbReference>
<dbReference type="GO" id="GO:0022625">
    <property type="term" value="C:cytosolic large ribosomal subunit"/>
    <property type="evidence" value="ECO:0007669"/>
    <property type="project" value="TreeGrafter"/>
</dbReference>
<dbReference type="GO" id="GO:0019843">
    <property type="term" value="F:rRNA binding"/>
    <property type="evidence" value="ECO:0007669"/>
    <property type="project" value="UniProtKB-UniRule"/>
</dbReference>
<dbReference type="GO" id="GO:0003735">
    <property type="term" value="F:structural constituent of ribosome"/>
    <property type="evidence" value="ECO:0007669"/>
    <property type="project" value="InterPro"/>
</dbReference>
<dbReference type="GO" id="GO:0006412">
    <property type="term" value="P:translation"/>
    <property type="evidence" value="ECO:0007669"/>
    <property type="project" value="UniProtKB-UniRule"/>
</dbReference>
<dbReference type="FunFam" id="2.40.30.10:FF:000004">
    <property type="entry name" value="50S ribosomal protein L3"/>
    <property type="match status" value="1"/>
</dbReference>
<dbReference type="FunFam" id="3.30.160.810:FF:000002">
    <property type="entry name" value="50S ribosomal protein L3"/>
    <property type="match status" value="1"/>
</dbReference>
<dbReference type="Gene3D" id="3.30.160.810">
    <property type="match status" value="1"/>
</dbReference>
<dbReference type="Gene3D" id="2.40.30.10">
    <property type="entry name" value="Translation factors"/>
    <property type="match status" value="1"/>
</dbReference>
<dbReference type="HAMAP" id="MF_01325_B">
    <property type="entry name" value="Ribosomal_uL3_B"/>
    <property type="match status" value="1"/>
</dbReference>
<dbReference type="InterPro" id="IPR000597">
    <property type="entry name" value="Ribosomal_uL3"/>
</dbReference>
<dbReference type="InterPro" id="IPR019927">
    <property type="entry name" value="Ribosomal_uL3_bac/org-type"/>
</dbReference>
<dbReference type="InterPro" id="IPR019926">
    <property type="entry name" value="Ribosomal_uL3_CS"/>
</dbReference>
<dbReference type="InterPro" id="IPR009000">
    <property type="entry name" value="Transl_B-barrel_sf"/>
</dbReference>
<dbReference type="NCBIfam" id="TIGR03625">
    <property type="entry name" value="L3_bact"/>
    <property type="match status" value="1"/>
</dbReference>
<dbReference type="PANTHER" id="PTHR11229">
    <property type="entry name" value="50S RIBOSOMAL PROTEIN L3"/>
    <property type="match status" value="1"/>
</dbReference>
<dbReference type="PANTHER" id="PTHR11229:SF16">
    <property type="entry name" value="LARGE RIBOSOMAL SUBUNIT PROTEIN UL3C"/>
    <property type="match status" value="1"/>
</dbReference>
<dbReference type="Pfam" id="PF00297">
    <property type="entry name" value="Ribosomal_L3"/>
    <property type="match status" value="1"/>
</dbReference>
<dbReference type="SUPFAM" id="SSF50447">
    <property type="entry name" value="Translation proteins"/>
    <property type="match status" value="1"/>
</dbReference>
<dbReference type="PROSITE" id="PS00474">
    <property type="entry name" value="RIBOSOMAL_L3"/>
    <property type="match status" value="1"/>
</dbReference>
<keyword id="KW-1185">Reference proteome</keyword>
<keyword id="KW-0687">Ribonucleoprotein</keyword>
<keyword id="KW-0689">Ribosomal protein</keyword>
<keyword id="KW-0694">RNA-binding</keyword>
<keyword id="KW-0699">rRNA-binding</keyword>
<protein>
    <recommendedName>
        <fullName evidence="1">Large ribosomal subunit protein uL3</fullName>
    </recommendedName>
    <alternativeName>
        <fullName evidence="3">50S ribosomal protein L3</fullName>
    </alternativeName>
</protein>
<comment type="function">
    <text evidence="1">One of the primary rRNA binding proteins, it binds directly near the 3'-end of the 23S rRNA, where it nucleates assembly of the 50S subunit.</text>
</comment>
<comment type="subunit">
    <text evidence="1">Part of the 50S ribosomal subunit. Forms a cluster with proteins L14 and L19.</text>
</comment>
<comment type="similarity">
    <text evidence="1">Belongs to the universal ribosomal protein uL3 family.</text>
</comment>
<feature type="chain" id="PRO_1000052150" description="Large ribosomal subunit protein uL3">
    <location>
        <begin position="1"/>
        <end position="208"/>
    </location>
</feature>
<feature type="region of interest" description="Disordered" evidence="2">
    <location>
        <begin position="116"/>
        <end position="148"/>
    </location>
</feature>
<organism>
    <name type="scientific">Streptococcus pneumoniae serotype 2 (strain D39 / NCTC 7466)</name>
    <dbReference type="NCBI Taxonomy" id="373153"/>
    <lineage>
        <taxon>Bacteria</taxon>
        <taxon>Bacillati</taxon>
        <taxon>Bacillota</taxon>
        <taxon>Bacilli</taxon>
        <taxon>Lactobacillales</taxon>
        <taxon>Streptococcaceae</taxon>
        <taxon>Streptococcus</taxon>
    </lineage>
</organism>